<reference key="1">
    <citation type="journal article" date="1992" name="J. Virol.">
        <title>Primary structure of the herpesvirus saimiri genome.</title>
        <authorList>
            <person name="Albrecht J.-C."/>
            <person name="Nicholas J."/>
            <person name="Biller D."/>
            <person name="Cameron K.R."/>
            <person name="Biesinger B."/>
            <person name="Newman C."/>
            <person name="Wittmann S."/>
            <person name="Craxton M.A."/>
            <person name="Coleman H."/>
            <person name="Fleckenstein B."/>
            <person name="Honess R.W."/>
        </authorList>
    </citation>
    <scope>NUCLEOTIDE SEQUENCE [LARGE SCALE GENOMIC DNA]</scope>
</reference>
<protein>
    <recommendedName>
        <fullName evidence="1">Capsid vertex component 2</fullName>
    </recommendedName>
</protein>
<organismHost>
    <name type="scientific">Saimiri sciureus</name>
    <name type="common">Common squirrel monkey</name>
    <dbReference type="NCBI Taxonomy" id="9521"/>
</organismHost>
<keyword id="KW-0167">Capsid protein</keyword>
<keyword id="KW-1048">Host nucleus</keyword>
<keyword id="KW-0945">Host-virus interaction</keyword>
<keyword id="KW-1185">Reference proteome</keyword>
<keyword id="KW-0231">Viral genome packaging</keyword>
<keyword id="KW-1163">Viral penetration into host nucleus</keyword>
<keyword id="KW-1188">Viral release from host cell</keyword>
<keyword id="KW-0946">Virion</keyword>
<keyword id="KW-1160">Virus entry into host cell</keyword>
<feature type="chain" id="PRO_0000116002" description="Capsid vertex component 2">
    <location>
        <begin position="1"/>
        <end position="543"/>
    </location>
</feature>
<feature type="region of interest" description="Interaction with major capsid protein/MCP" evidence="1">
    <location>
        <begin position="1"/>
        <end position="54"/>
    </location>
</feature>
<feature type="region of interest" description="Disordered" evidence="2">
    <location>
        <begin position="101"/>
        <end position="120"/>
    </location>
</feature>
<comment type="function">
    <text evidence="1">Capsid vertex-specific component that plays a role during viral DNA encapsidation, assuring correct genome cleavage and presumably stabilizing capsids that contain full-length viral genomes. Participates in the interaction between the capsid and the tegument through interaction with the large tegument protein/LTP.</text>
</comment>
<comment type="subunit">
    <text evidence="1">Heterodimerizes with CVC1. Interacts with major capsid protein/MCP and triplex capsid protein 1/TRX1 at the pentamer vertices. Interacts with the large tegument protein/LTP.</text>
</comment>
<comment type="subcellular location">
    <subcellularLocation>
        <location evidence="1">Virion</location>
    </subcellularLocation>
    <subcellularLocation>
        <location evidence="1">Host nucleus</location>
    </subcellularLocation>
</comment>
<comment type="similarity">
    <text evidence="1">Belongs to the herpesviridae CVC2 protein family.</text>
</comment>
<dbReference type="EMBL" id="X64346">
    <property type="protein sequence ID" value="CAA45642.1"/>
    <property type="molecule type" value="Genomic_DNA"/>
</dbReference>
<dbReference type="RefSeq" id="NP_040221.1">
    <property type="nucleotide sequence ID" value="NC_001350.1"/>
</dbReference>
<dbReference type="SMR" id="Q01004"/>
<dbReference type="KEGG" id="vg:1682462"/>
<dbReference type="Proteomes" id="UP000000587">
    <property type="component" value="Segment"/>
</dbReference>
<dbReference type="GO" id="GO:0043657">
    <property type="term" value="C:host cell"/>
    <property type="evidence" value="ECO:0007669"/>
    <property type="project" value="GOC"/>
</dbReference>
<dbReference type="GO" id="GO:0042025">
    <property type="term" value="C:host cell nucleus"/>
    <property type="evidence" value="ECO:0007669"/>
    <property type="project" value="UniProtKB-SubCell"/>
</dbReference>
<dbReference type="GO" id="GO:0019028">
    <property type="term" value="C:viral capsid"/>
    <property type="evidence" value="ECO:0007669"/>
    <property type="project" value="UniProtKB-KW"/>
</dbReference>
<dbReference type="GO" id="GO:0046718">
    <property type="term" value="P:symbiont entry into host cell"/>
    <property type="evidence" value="ECO:0007669"/>
    <property type="project" value="UniProtKB-KW"/>
</dbReference>
<dbReference type="GO" id="GO:0019072">
    <property type="term" value="P:viral genome packaging"/>
    <property type="evidence" value="ECO:0007669"/>
    <property type="project" value="InterPro"/>
</dbReference>
<dbReference type="GO" id="GO:0075732">
    <property type="term" value="P:viral penetration into host nucleus"/>
    <property type="evidence" value="ECO:0007669"/>
    <property type="project" value="UniProtKB-KW"/>
</dbReference>
<dbReference type="HAMAP" id="MF_04025">
    <property type="entry name" value="HSV_CVC2"/>
    <property type="match status" value="1"/>
</dbReference>
<dbReference type="InterPro" id="IPR002493">
    <property type="entry name" value="Herpes_UL25"/>
</dbReference>
<dbReference type="Pfam" id="PF01499">
    <property type="entry name" value="Herpes_UL25"/>
    <property type="match status" value="1"/>
</dbReference>
<organism>
    <name type="scientific">Saimiriine herpesvirus 2 (strain 11)</name>
    <name type="common">SaHV-2</name>
    <name type="synonym">Herpesvirus saimiri</name>
    <dbReference type="NCBI Taxonomy" id="10383"/>
    <lineage>
        <taxon>Viruses</taxon>
        <taxon>Duplodnaviria</taxon>
        <taxon>Heunggongvirae</taxon>
        <taxon>Peploviricota</taxon>
        <taxon>Herviviricetes</taxon>
        <taxon>Herpesvirales</taxon>
        <taxon>Orthoherpesviridae</taxon>
        <taxon>Gammaherpesvirinae</taxon>
        <taxon>Rhadinovirus</taxon>
        <taxon>Rhadinovirus saimiriinegamma2</taxon>
        <taxon>Saimiriine herpesvirus 2</taxon>
    </lineage>
</organism>
<name>CVC2_SHV21</name>
<accession>Q01004</accession>
<sequence length="543" mass="61485">MWKLEKKYILRQNPSVFLNGTAFWTPHPQNILHIDRNSLRETKKNASLYRTRLLNLETEQIKKAMINYELDKLMQDHVKRSSIITRDLEIIENMVEKFQDSPQLLPSPPKPLSPTTQSQPTNFKTNVYTITVAPGDPGFTVESNFKIELVSSLYTNQQQWLPSYGPWYSSLTDIAMQRRVFPKELRGTLNYQNSTSLKLMHAVLTTISSATDDFYSDVRHISDTSSALVILNAYFCLKTSAPIPVTYEELLNNLEAKLGMFVFDLKNHTGGNGFSFSPQVNEATSSIAPPNKDTKYSQHFFSSHKIYSLLEASGLLSTKSHEINPKTDVIYTITTEIFGEDIPPMASFQWNLRVGIIAIEVFVITYLLLETSQISIHSTHRRLNLSTLLGSKFKKSSTGLLNQIVYKKGQVFSFLNKNYIVPTLTHNKNVPTSFLFPGVTLIALESLATTAVDKPFINLTGNRFQDIFEIINQKFTFKDPVSLMAAQTALRFKVEHGLSNILTNLSPTTFATEIIRRQFGGEDDYDTLYFIVLGCLPIAWAAV</sequence>
<evidence type="ECO:0000255" key="1">
    <source>
        <dbReference type="HAMAP-Rule" id="MF_04025"/>
    </source>
</evidence>
<evidence type="ECO:0000256" key="2">
    <source>
        <dbReference type="SAM" id="MobiDB-lite"/>
    </source>
</evidence>
<gene>
    <name evidence="1" type="primary">CVC2</name>
    <name type="ordered locus">19</name>
</gene>
<proteinExistence type="inferred from homology"/>